<feature type="chain" id="PRO_0000191051" description="Solute carrier organic anion transporter family member 1B2">
    <location>
        <begin position="1"/>
        <end position="689"/>
    </location>
</feature>
<feature type="topological domain" description="Cytoplasmic" evidence="3">
    <location>
        <begin position="1"/>
        <end position="26"/>
    </location>
</feature>
<feature type="transmembrane region" description="Helical; Name=1" evidence="3">
    <location>
        <begin position="27"/>
        <end position="46"/>
    </location>
</feature>
<feature type="topological domain" description="Extracellular" evidence="3">
    <location>
        <begin position="47"/>
        <end position="65"/>
    </location>
</feature>
<feature type="transmembrane region" description="Helical; Name=2" evidence="3">
    <location>
        <begin position="66"/>
        <end position="86"/>
    </location>
</feature>
<feature type="topological domain" description="Cytoplasmic" evidence="3">
    <location>
        <begin position="87"/>
        <end position="92"/>
    </location>
</feature>
<feature type="transmembrane region" description="Helical; Name=3" evidence="3">
    <location>
        <begin position="93"/>
        <end position="117"/>
    </location>
</feature>
<feature type="topological domain" description="Extracellular" evidence="3">
    <location>
        <begin position="118"/>
        <end position="163"/>
    </location>
</feature>
<feature type="transmembrane region" description="Helical; Name=4" evidence="3">
    <location>
        <begin position="164"/>
        <end position="192"/>
    </location>
</feature>
<feature type="topological domain" description="Cytoplasmic" evidence="3">
    <location>
        <begin position="193"/>
        <end position="211"/>
    </location>
</feature>
<feature type="transmembrane region" description="Helical; Name=5" evidence="3">
    <location>
        <begin position="212"/>
        <end position="232"/>
    </location>
</feature>
<feature type="topological domain" description="Extracellular" evidence="3">
    <location>
        <begin position="233"/>
        <end position="250"/>
    </location>
</feature>
<feature type="transmembrane region" description="Helical; Name=6" evidence="3">
    <location>
        <begin position="251"/>
        <end position="275"/>
    </location>
</feature>
<feature type="topological domain" description="Cytoplasmic" evidence="3">
    <location>
        <begin position="276"/>
        <end position="326"/>
    </location>
</feature>
<feature type="transmembrane region" description="Helical; Name=7" evidence="3">
    <location>
        <begin position="327"/>
        <end position="348"/>
    </location>
</feature>
<feature type="topological domain" description="Extracellular" evidence="3">
    <location>
        <begin position="349"/>
        <end position="368"/>
    </location>
</feature>
<feature type="transmembrane region" description="Helical; Name=8" evidence="3">
    <location>
        <begin position="369"/>
        <end position="392"/>
    </location>
</feature>
<feature type="topological domain" description="Cytoplasmic" evidence="3">
    <location>
        <begin position="393"/>
        <end position="396"/>
    </location>
</feature>
<feature type="transmembrane region" description="Helical; Name=9" evidence="3">
    <location>
        <begin position="397"/>
        <end position="420"/>
    </location>
</feature>
<feature type="topological domain" description="Extracellular" evidence="3">
    <location>
        <begin position="421"/>
        <end position="533"/>
    </location>
</feature>
<feature type="transmembrane region" description="Helical; Name=10" evidence="3">
    <location>
        <begin position="534"/>
        <end position="556"/>
    </location>
</feature>
<feature type="topological domain" description="Cytoplasmic" evidence="3">
    <location>
        <begin position="557"/>
        <end position="565"/>
    </location>
</feature>
<feature type="transmembrane region" description="Helical; Name=11" evidence="3">
    <location>
        <begin position="566"/>
        <end position="591"/>
    </location>
</feature>
<feature type="topological domain" description="Extracellular" evidence="3">
    <location>
        <begin position="592"/>
        <end position="625"/>
    </location>
</feature>
<feature type="transmembrane region" description="Helical; Name=12" evidence="3">
    <location>
        <begin position="626"/>
        <end position="643"/>
    </location>
</feature>
<feature type="topological domain" description="Cytoplasmic" evidence="3">
    <location>
        <begin position="644"/>
        <end position="689"/>
    </location>
</feature>
<feature type="domain" description="Kazal-like" evidence="4">
    <location>
        <begin position="448"/>
        <end position="505"/>
    </location>
</feature>
<feature type="region of interest" description="Disordered" evidence="5">
    <location>
        <begin position="658"/>
        <end position="689"/>
    </location>
</feature>
<feature type="compositionally biased region" description="Basic and acidic residues" evidence="5">
    <location>
        <begin position="680"/>
        <end position="689"/>
    </location>
</feature>
<feature type="modified residue" description="Phosphoserine" evidence="7 8 9 10">
    <location>
        <position position="288"/>
    </location>
</feature>
<feature type="modified residue" description="Phosphoserine" evidence="8 9">
    <location>
        <position position="290"/>
    </location>
</feature>
<feature type="modified residue" description="Phosphothreonine" evidence="8 10">
    <location>
        <position position="662"/>
    </location>
</feature>
<feature type="modified residue" description="Phosphoserine" evidence="2">
    <location>
        <position position="680"/>
    </location>
</feature>
<feature type="glycosylation site" description="N-linked (GlcNAc...) asparagine" evidence="3">
    <location>
        <position position="132"/>
    </location>
</feature>
<feature type="glycosylation site" description="N-linked (GlcNAc...) asparagine" evidence="3">
    <location>
        <position position="140"/>
    </location>
</feature>
<feature type="glycosylation site" description="N-linked (GlcNAc...) asparagine" evidence="3">
    <location>
        <position position="513"/>
    </location>
</feature>
<feature type="disulfide bond" evidence="4">
    <location>
        <begin position="454"/>
        <end position="484"/>
    </location>
</feature>
<feature type="disulfide bond" evidence="4">
    <location>
        <begin position="460"/>
        <end position="480"/>
    </location>
</feature>
<feature type="disulfide bond" evidence="4">
    <location>
        <begin position="469"/>
        <end position="503"/>
    </location>
</feature>
<feature type="splice variant" id="VSP_006149" description="In isoform 2." evidence="6">
    <original>T</original>
    <variation>TAKLYVDVGYVDLRSVRITP</variation>
    <location>
        <position position="398"/>
    </location>
</feature>
<feature type="sequence conflict" description="In Ref. 2; AAF74719." evidence="6" ref="2">
    <original>N</original>
    <variation>H</variation>
    <location>
        <position position="455"/>
    </location>
</feature>
<feature type="sequence conflict" description="In Ref. 2; AAF74719." evidence="6" ref="2">
    <original>L</original>
    <variation>R</variation>
    <location>
        <position position="481"/>
    </location>
</feature>
<reference key="1">
    <citation type="journal article" date="2000" name="Biochem. Biophys. Res. Commun.">
        <title>Full-length cDNA cloning and genomic organization of the mouse liver-specific organic anion transporter-1 (lst-1).</title>
        <authorList>
            <person name="Ogura K."/>
            <person name="Choudhuri S."/>
            <person name="Klaassen C.D."/>
        </authorList>
    </citation>
    <scope>NUCLEOTIDE SEQUENCE [MRNA] (ISOFORM 1)</scope>
    <source>
        <strain>129/SvJ</strain>
        <strain>BALB/cJ</strain>
        <tissue>Liver</tissue>
    </source>
</reference>
<reference key="2">
    <citation type="submission" date="2000-03" db="EMBL/GenBank/DDBJ databases">
        <title>Molecular cloning of mouse hepatic liver-specific transporter (lst-1/oatp-c/slc21a6).</title>
        <authorList>
            <person name="Ananthnarayanan M."/>
            <person name="Balasubramanian N.V."/>
        </authorList>
    </citation>
    <scope>NUCLEOTIDE SEQUENCE OF 245-689 (ISOFORM 2)</scope>
    <source>
        <strain>C57BL/6J</strain>
        <tissue>Liver</tissue>
    </source>
</reference>
<reference key="3">
    <citation type="journal article" date="2007" name="Mol. Cell. Proteomics">
        <title>Mitochondrial phosphoproteome revealed by an improved IMAC method and MS/MS/MS.</title>
        <authorList>
            <person name="Lee J."/>
            <person name="Xu Y."/>
            <person name="Chen Y."/>
            <person name="Sprung R."/>
            <person name="Kim S.C."/>
            <person name="Xie S."/>
            <person name="Zhao Y."/>
        </authorList>
    </citation>
    <scope>PHOSPHORYLATION [LARGE SCALE ANALYSIS] AT SER-288</scope>
    <scope>IDENTIFICATION BY MASS SPECTROMETRY [LARGE SCALE ANALYSIS]</scope>
    <source>
        <tissue>Liver</tissue>
    </source>
</reference>
<reference key="4">
    <citation type="journal article" date="2007" name="Proc. Natl. Acad. Sci. U.S.A.">
        <title>Large-scale phosphorylation analysis of mouse liver.</title>
        <authorList>
            <person name="Villen J."/>
            <person name="Beausoleil S.A."/>
            <person name="Gerber S.A."/>
            <person name="Gygi S.P."/>
        </authorList>
    </citation>
    <scope>PHOSPHORYLATION [LARGE SCALE ANALYSIS] AT SER-288; SER-290 AND THR-662</scope>
    <scope>IDENTIFICATION BY MASS SPECTROMETRY [LARGE SCALE ANALYSIS]</scope>
    <source>
        <tissue>Liver</tissue>
    </source>
</reference>
<reference key="5">
    <citation type="journal article" date="2008" name="J. Proteome Res.">
        <title>Specific phosphopeptide enrichment with immobilized titanium ion affinity chromatography adsorbent for phosphoproteome analysis.</title>
        <authorList>
            <person name="Zhou H."/>
            <person name="Ye M."/>
            <person name="Dong J."/>
            <person name="Han G."/>
            <person name="Jiang X."/>
            <person name="Wu R."/>
            <person name="Zou H."/>
        </authorList>
    </citation>
    <scope>PHOSPHORYLATION [LARGE SCALE ANALYSIS] AT SER-288 AND SER-290</scope>
    <scope>IDENTIFICATION BY MASS SPECTROMETRY [LARGE SCALE ANALYSIS]</scope>
    <source>
        <tissue>Liver</tissue>
    </source>
</reference>
<reference key="6">
    <citation type="journal article" date="2010" name="Cell">
        <title>A tissue-specific atlas of mouse protein phosphorylation and expression.</title>
        <authorList>
            <person name="Huttlin E.L."/>
            <person name="Jedrychowski M.P."/>
            <person name="Elias J.E."/>
            <person name="Goswami T."/>
            <person name="Rad R."/>
            <person name="Beausoleil S.A."/>
            <person name="Villen J."/>
            <person name="Haas W."/>
            <person name="Sowa M.E."/>
            <person name="Gygi S.P."/>
        </authorList>
    </citation>
    <scope>PHOSPHORYLATION [LARGE SCALE ANALYSIS] AT SER-288 AND THR-662</scope>
    <scope>IDENTIFICATION BY MASS SPECTROMETRY [LARGE SCALE ANALYSIS]</scope>
    <source>
        <tissue>Liver</tissue>
    </source>
</reference>
<sequence>MDQTQHPSKAAQPLRSEKTRHCDGFRIFLAALSFSYICKALGGVIMKSSITQIERRFDIPSSISGLIDGGFEIGNLLVIVFVSYFGSKLHRPKLIGTGCFIMGIGSILTALPHFFMGYYRYATENDISSLHNSTLTCLVNQTTSLTGTSPEIMEKGCEKGSNSYTWIYVLMGNMLRGIGETPIVPLGVSYIDDFAKEGNSSMYLGTLHTIAMIGPILGFIMSSVFAKLYVDVGYVDLRSVRITPQDARWVGAWWLGFIVNGLLCIICSIPFFFLPKIPKRSQKERKNSASLHVLKTDEDKNPVTNPTTQEKQAPANLTGFLWSLRSILTNEQYVIFLILTLLQISSFIGSFTYLFKFIEQQFGQTASQANFLLGVITIPTMASGMFLGGYLIKRLKLTLLGITKFVFFTTTMAYVFYLSYFLLICENKAFAGLTLTYDGMNPVDSHIDVPLSYCNSDCICDKNQWEPVCGENGVTYISPCLAGCKSFRGDKKLMNIEFYDCSCVSGSGFQKGNHSARLGECPRDKCKTKYYFYITFQVIISFFTALGSTSLMLILIRSVQPELKSLGMGFHSLVVRTLGGILAPVYYGALIDRTCMKWSVTSCGARGACRLYNSRLFGMIYVGLSIALKTPILLLYVALIYVMKRKMKRNDNKILENGRKFTDEGNPEPVNNNGYSCVPSDEKNSETPL</sequence>
<evidence type="ECO:0000250" key="1">
    <source>
        <dbReference type="UniProtKB" id="Q9QZX8"/>
    </source>
</evidence>
<evidence type="ECO:0000250" key="2">
    <source>
        <dbReference type="UniProtKB" id="Q9Y6L6"/>
    </source>
</evidence>
<evidence type="ECO:0000255" key="3"/>
<evidence type="ECO:0000255" key="4">
    <source>
        <dbReference type="PROSITE-ProRule" id="PRU00798"/>
    </source>
</evidence>
<evidence type="ECO:0000256" key="5">
    <source>
        <dbReference type="SAM" id="MobiDB-lite"/>
    </source>
</evidence>
<evidence type="ECO:0000305" key="6"/>
<evidence type="ECO:0007744" key="7">
    <source>
    </source>
</evidence>
<evidence type="ECO:0007744" key="8">
    <source>
    </source>
</evidence>
<evidence type="ECO:0007744" key="9">
    <source>
    </source>
</evidence>
<evidence type="ECO:0007744" key="10">
    <source>
    </source>
</evidence>
<protein>
    <recommendedName>
        <fullName>Solute carrier organic anion transporter family member 1B2</fullName>
    </recommendedName>
    <alternativeName>
        <fullName>Liver-specific organic anion transporter 1</fullName>
        <shortName>LST-1</shortName>
    </alternativeName>
    <alternativeName>
        <fullName>SLC21A6</fullName>
    </alternativeName>
    <alternativeName>
        <fullName>Solute carrier family 21 member 10</fullName>
    </alternativeName>
</protein>
<accession>Q9JJL3</accession>
<accession>Q9JI79</accession>
<accession>Q9JJJ1</accession>
<dbReference type="EMBL" id="AB031959">
    <property type="protein sequence ID" value="BAB03272.1"/>
    <property type="molecule type" value="mRNA"/>
</dbReference>
<dbReference type="EMBL" id="AB037202">
    <property type="protein sequence ID" value="BAA98050.1"/>
    <property type="status" value="ALT_SEQ"/>
    <property type="molecule type" value="Genomic_DNA"/>
</dbReference>
<dbReference type="EMBL" id="AF250912">
    <property type="protein sequence ID" value="AAF74719.1"/>
    <property type="molecule type" value="mRNA"/>
</dbReference>
<dbReference type="CCDS" id="CCDS20678.1">
    <molecule id="Q9JJL3-1"/>
</dbReference>
<dbReference type="PIR" id="JC7286">
    <property type="entry name" value="JC7286"/>
</dbReference>
<dbReference type="RefSeq" id="NP_065241.1">
    <molecule id="Q9JJL3-1"/>
    <property type="nucleotide sequence ID" value="NM_020495.2"/>
</dbReference>
<dbReference type="RefSeq" id="XP_006507026.1">
    <molecule id="Q9JJL3-1"/>
    <property type="nucleotide sequence ID" value="XM_006506963.2"/>
</dbReference>
<dbReference type="RefSeq" id="XP_017177100.1">
    <molecule id="Q9JJL3-1"/>
    <property type="nucleotide sequence ID" value="XM_017321611.3"/>
</dbReference>
<dbReference type="RefSeq" id="XP_036022101.1">
    <molecule id="Q9JJL3-1"/>
    <property type="nucleotide sequence ID" value="XM_036166208.1"/>
</dbReference>
<dbReference type="SMR" id="Q9JJL3"/>
<dbReference type="FunCoup" id="Q9JJL3">
    <property type="interactions" value="48"/>
</dbReference>
<dbReference type="STRING" id="10090.ENSMUSP00000044326"/>
<dbReference type="GlyCosmos" id="Q9JJL3">
    <property type="glycosylation" value="3 sites, No reported glycans"/>
</dbReference>
<dbReference type="GlyGen" id="Q9JJL3">
    <property type="glycosylation" value="3 sites"/>
</dbReference>
<dbReference type="iPTMnet" id="Q9JJL3"/>
<dbReference type="PhosphoSitePlus" id="Q9JJL3"/>
<dbReference type="SwissPalm" id="Q9JJL3"/>
<dbReference type="jPOST" id="Q9JJL3"/>
<dbReference type="PaxDb" id="10090-ENSMUSP00000044326"/>
<dbReference type="PeptideAtlas" id="Q9JJL3"/>
<dbReference type="ProteomicsDB" id="261309">
    <molecule id="Q9JJL3-1"/>
</dbReference>
<dbReference type="ProteomicsDB" id="261310">
    <molecule id="Q9JJL3-2"/>
</dbReference>
<dbReference type="DNASU" id="28253"/>
<dbReference type="Ensembl" id="ENSMUST00000042812.9">
    <molecule id="Q9JJL3-1"/>
    <property type="protein sequence ID" value="ENSMUSP00000044326.7"/>
    <property type="gene ID" value="ENSMUSG00000030236.11"/>
</dbReference>
<dbReference type="GeneID" id="28253"/>
<dbReference type="KEGG" id="mmu:28253"/>
<dbReference type="UCSC" id="uc009eoq.1">
    <molecule id="Q9JJL3-1"/>
    <property type="organism name" value="mouse"/>
</dbReference>
<dbReference type="AGR" id="MGI:1351899"/>
<dbReference type="CTD" id="28253"/>
<dbReference type="MGI" id="MGI:1351899">
    <property type="gene designation" value="Slco1b2"/>
</dbReference>
<dbReference type="VEuPathDB" id="HostDB:ENSMUSG00000030236"/>
<dbReference type="eggNOG" id="KOG3626">
    <property type="taxonomic scope" value="Eukaryota"/>
</dbReference>
<dbReference type="GeneTree" id="ENSGT01130000278287"/>
<dbReference type="HOGENOM" id="CLU_008954_4_0_1"/>
<dbReference type="InParanoid" id="Q9JJL3"/>
<dbReference type="OMA" id="ECPRDSQ"/>
<dbReference type="OrthoDB" id="5062115at2759"/>
<dbReference type="PhylomeDB" id="Q9JJL3"/>
<dbReference type="TreeFam" id="TF317540"/>
<dbReference type="Reactome" id="R-MMU-159418">
    <property type="pathway name" value="Recycling of bile acids and salts"/>
</dbReference>
<dbReference type="Reactome" id="R-MMU-189483">
    <property type="pathway name" value="Heme degradation"/>
</dbReference>
<dbReference type="Reactome" id="R-MMU-879518">
    <property type="pathway name" value="Transport of organic anions"/>
</dbReference>
<dbReference type="Reactome" id="R-MMU-9754706">
    <property type="pathway name" value="Atorvastatin ADME"/>
</dbReference>
<dbReference type="BioGRID-ORCS" id="28253">
    <property type="hits" value="3 hits in 79 CRISPR screens"/>
</dbReference>
<dbReference type="PRO" id="PR:Q9JJL3"/>
<dbReference type="Proteomes" id="UP000000589">
    <property type="component" value="Chromosome 6"/>
</dbReference>
<dbReference type="RNAct" id="Q9JJL3">
    <property type="molecule type" value="protein"/>
</dbReference>
<dbReference type="Bgee" id="ENSMUSG00000030236">
    <property type="expression patterns" value="Expressed in left lobe of liver and 23 other cell types or tissues"/>
</dbReference>
<dbReference type="ExpressionAtlas" id="Q9JJL3">
    <property type="expression patterns" value="baseline and differential"/>
</dbReference>
<dbReference type="GO" id="GO:0016323">
    <property type="term" value="C:basolateral plasma membrane"/>
    <property type="evidence" value="ECO:0007669"/>
    <property type="project" value="Ensembl"/>
</dbReference>
<dbReference type="GO" id="GO:0005886">
    <property type="term" value="C:plasma membrane"/>
    <property type="evidence" value="ECO:0000250"/>
    <property type="project" value="MGI"/>
</dbReference>
<dbReference type="GO" id="GO:0015125">
    <property type="term" value="F:bile acid transmembrane transporter activity"/>
    <property type="evidence" value="ECO:0007669"/>
    <property type="project" value="Ensembl"/>
</dbReference>
<dbReference type="GO" id="GO:0035673">
    <property type="term" value="F:oligopeptide transmembrane transporter activity"/>
    <property type="evidence" value="ECO:0007669"/>
    <property type="project" value="Ensembl"/>
</dbReference>
<dbReference type="GO" id="GO:0008514">
    <property type="term" value="F:organic anion transmembrane transporter activity"/>
    <property type="evidence" value="ECO:0000250"/>
    <property type="project" value="UniProtKB"/>
</dbReference>
<dbReference type="GO" id="GO:0006789">
    <property type="term" value="P:bilirubin conjugation"/>
    <property type="evidence" value="ECO:0000315"/>
    <property type="project" value="MGI"/>
</dbReference>
<dbReference type="GO" id="GO:0051649">
    <property type="term" value="P:establishment of localization in cell"/>
    <property type="evidence" value="ECO:0000315"/>
    <property type="project" value="MGI"/>
</dbReference>
<dbReference type="GO" id="GO:0010467">
    <property type="term" value="P:gene expression"/>
    <property type="evidence" value="ECO:0000315"/>
    <property type="project" value="MGI"/>
</dbReference>
<dbReference type="GO" id="GO:0098657">
    <property type="term" value="P:import into cell"/>
    <property type="evidence" value="ECO:0000315"/>
    <property type="project" value="MGI"/>
</dbReference>
<dbReference type="GO" id="GO:0001889">
    <property type="term" value="P:liver development"/>
    <property type="evidence" value="ECO:0007669"/>
    <property type="project" value="Ensembl"/>
</dbReference>
<dbReference type="GO" id="GO:1905431">
    <property type="term" value="P:microcystin transport"/>
    <property type="evidence" value="ECO:0000315"/>
    <property type="project" value="MGI"/>
</dbReference>
<dbReference type="GO" id="GO:0006811">
    <property type="term" value="P:monoatomic ion transport"/>
    <property type="evidence" value="ECO:0007669"/>
    <property type="project" value="UniProtKB-KW"/>
</dbReference>
<dbReference type="GO" id="GO:0019228">
    <property type="term" value="P:neuronal action potential"/>
    <property type="evidence" value="ECO:0000315"/>
    <property type="project" value="MGI"/>
</dbReference>
<dbReference type="GO" id="GO:0015833">
    <property type="term" value="P:peptide transport"/>
    <property type="evidence" value="ECO:0000315"/>
    <property type="project" value="MGI"/>
</dbReference>
<dbReference type="GO" id="GO:0042440">
    <property type="term" value="P:pigment metabolic process"/>
    <property type="evidence" value="ECO:0000315"/>
    <property type="project" value="MGI"/>
</dbReference>
<dbReference type="GO" id="GO:0006778">
    <property type="term" value="P:porphyrin-containing compound metabolic process"/>
    <property type="evidence" value="ECO:0000315"/>
    <property type="project" value="MGI"/>
</dbReference>
<dbReference type="GO" id="GO:0034097">
    <property type="term" value="P:response to cytokine"/>
    <property type="evidence" value="ECO:0007669"/>
    <property type="project" value="Ensembl"/>
</dbReference>
<dbReference type="GO" id="GO:0043627">
    <property type="term" value="P:response to estrogen"/>
    <property type="evidence" value="ECO:0000315"/>
    <property type="project" value="MGI"/>
</dbReference>
<dbReference type="GO" id="GO:0051384">
    <property type="term" value="P:response to glucocorticoid"/>
    <property type="evidence" value="ECO:0007669"/>
    <property type="project" value="Ensembl"/>
</dbReference>
<dbReference type="GO" id="GO:0009408">
    <property type="term" value="P:response to heat"/>
    <property type="evidence" value="ECO:0000315"/>
    <property type="project" value="MGI"/>
</dbReference>
<dbReference type="GO" id="GO:0032496">
    <property type="term" value="P:response to lipopolysaccharide"/>
    <property type="evidence" value="ECO:0007669"/>
    <property type="project" value="Ensembl"/>
</dbReference>
<dbReference type="GO" id="GO:0009612">
    <property type="term" value="P:response to mechanical stimulus"/>
    <property type="evidence" value="ECO:0000315"/>
    <property type="project" value="MGI"/>
</dbReference>
<dbReference type="GO" id="GO:1904640">
    <property type="term" value="P:response to methionine"/>
    <property type="evidence" value="ECO:0000315"/>
    <property type="project" value="MGI"/>
</dbReference>
<dbReference type="GO" id="GO:0048265">
    <property type="term" value="P:response to pain"/>
    <property type="evidence" value="ECO:0000315"/>
    <property type="project" value="MGI"/>
</dbReference>
<dbReference type="GO" id="GO:1901652">
    <property type="term" value="P:response to peptide"/>
    <property type="evidence" value="ECO:0000315"/>
    <property type="project" value="MGI"/>
</dbReference>
<dbReference type="GO" id="GO:0043434">
    <property type="term" value="P:response to peptide hormone"/>
    <property type="evidence" value="ECO:0007669"/>
    <property type="project" value="Ensembl"/>
</dbReference>
<dbReference type="GO" id="GO:0009636">
    <property type="term" value="P:response to toxic substance"/>
    <property type="evidence" value="ECO:0000315"/>
    <property type="project" value="MGI"/>
</dbReference>
<dbReference type="GO" id="GO:0009410">
    <property type="term" value="P:response to xenobiotic stimulus"/>
    <property type="evidence" value="ECO:0000315"/>
    <property type="project" value="MGI"/>
</dbReference>
<dbReference type="GO" id="GO:0006805">
    <property type="term" value="P:xenobiotic metabolic process"/>
    <property type="evidence" value="ECO:0000315"/>
    <property type="project" value="MGI"/>
</dbReference>
<dbReference type="GO" id="GO:0006855">
    <property type="term" value="P:xenobiotic transmembrane transport"/>
    <property type="evidence" value="ECO:0000314"/>
    <property type="project" value="MGI"/>
</dbReference>
<dbReference type="GO" id="GO:0042908">
    <property type="term" value="P:xenobiotic transport"/>
    <property type="evidence" value="ECO:0000315"/>
    <property type="project" value="MGI"/>
</dbReference>
<dbReference type="Gene3D" id="3.30.60.30">
    <property type="match status" value="1"/>
</dbReference>
<dbReference type="Gene3D" id="1.20.1250.20">
    <property type="entry name" value="MFS general substrate transporter like domains"/>
    <property type="match status" value="1"/>
</dbReference>
<dbReference type="InterPro" id="IPR002350">
    <property type="entry name" value="Kazal_dom"/>
</dbReference>
<dbReference type="InterPro" id="IPR036058">
    <property type="entry name" value="Kazal_dom_sf"/>
</dbReference>
<dbReference type="InterPro" id="IPR020846">
    <property type="entry name" value="MFS_dom"/>
</dbReference>
<dbReference type="InterPro" id="IPR036259">
    <property type="entry name" value="MFS_trans_sf"/>
</dbReference>
<dbReference type="InterPro" id="IPR004156">
    <property type="entry name" value="OATP"/>
</dbReference>
<dbReference type="NCBIfam" id="TIGR00805">
    <property type="entry name" value="oat"/>
    <property type="match status" value="1"/>
</dbReference>
<dbReference type="PANTHER" id="PTHR11388">
    <property type="entry name" value="ORGANIC ANION TRANSPORTER"/>
    <property type="match status" value="1"/>
</dbReference>
<dbReference type="PANTHER" id="PTHR11388:SF89">
    <property type="entry name" value="SOLUTE CARRIER ORGANIC ANION TRANSPORTER FAMILY MEMBER 1B3"/>
    <property type="match status" value="1"/>
</dbReference>
<dbReference type="Pfam" id="PF07648">
    <property type="entry name" value="Kazal_2"/>
    <property type="match status" value="1"/>
</dbReference>
<dbReference type="Pfam" id="PF03137">
    <property type="entry name" value="OATP"/>
    <property type="match status" value="1"/>
</dbReference>
<dbReference type="SMART" id="SM00280">
    <property type="entry name" value="KAZAL"/>
    <property type="match status" value="1"/>
</dbReference>
<dbReference type="SUPFAM" id="SSF100895">
    <property type="entry name" value="Kazal-type serine protease inhibitors"/>
    <property type="match status" value="1"/>
</dbReference>
<dbReference type="SUPFAM" id="SSF103473">
    <property type="entry name" value="MFS general substrate transporter"/>
    <property type="match status" value="1"/>
</dbReference>
<dbReference type="PROSITE" id="PS51465">
    <property type="entry name" value="KAZAL_2"/>
    <property type="match status" value="1"/>
</dbReference>
<dbReference type="PROSITE" id="PS50850">
    <property type="entry name" value="MFS"/>
    <property type="match status" value="1"/>
</dbReference>
<keyword id="KW-0025">Alternative splicing</keyword>
<keyword id="KW-1003">Cell membrane</keyword>
<keyword id="KW-1015">Disulfide bond</keyword>
<keyword id="KW-0325">Glycoprotein</keyword>
<keyword id="KW-0406">Ion transport</keyword>
<keyword id="KW-0472">Membrane</keyword>
<keyword id="KW-0597">Phosphoprotein</keyword>
<keyword id="KW-1185">Reference proteome</keyword>
<keyword id="KW-0812">Transmembrane</keyword>
<keyword id="KW-1133">Transmembrane helix</keyword>
<keyword id="KW-0813">Transport</keyword>
<comment type="function">
    <text evidence="1">Mediates the Na(+)-independent uptake of organic anions such as taurochlate, bromosulfophthalein and steroid conjugates (estrone 3-sulfate, 17-beta-glucuronosyl estradiol, dehydroepiandrosterone sulfate). Also transports prostaglandin E2 and L-thyroxine (T4). Shows a pH-sensitive substrate specificity which may be ascribed to the protonation state of the binding site and leads to a stimulation of substrate transport in an acidic microenvironment. Hydrogencarbonate/HCO3(-) acts as the probable counteranion that exchanges for organic anions.</text>
</comment>
<comment type="catalytic activity">
    <reaction evidence="1">
        <text>estrone 3-sulfate(out) = estrone 3-sulfate(in)</text>
        <dbReference type="Rhea" id="RHEA:71835"/>
        <dbReference type="ChEBI" id="CHEBI:60050"/>
    </reaction>
</comment>
<comment type="catalytic activity">
    <reaction evidence="1">
        <text>taurocholate(out) = taurocholate(in)</text>
        <dbReference type="Rhea" id="RHEA:71703"/>
        <dbReference type="ChEBI" id="CHEBI:36257"/>
    </reaction>
</comment>
<comment type="catalytic activity">
    <reaction evidence="1">
        <text>prostaglandin E2(out) = prostaglandin E2(in)</text>
        <dbReference type="Rhea" id="RHEA:50984"/>
        <dbReference type="ChEBI" id="CHEBI:606564"/>
    </reaction>
</comment>
<comment type="catalytic activity">
    <reaction evidence="1">
        <text>L-thyroxine(out) = L-thyroxine(in)</text>
        <dbReference type="Rhea" id="RHEA:71819"/>
        <dbReference type="ChEBI" id="CHEBI:58448"/>
    </reaction>
</comment>
<comment type="subcellular location">
    <subcellularLocation>
        <location>Cell membrane</location>
        <topology>Multi-pass membrane protein</topology>
    </subcellularLocation>
</comment>
<comment type="alternative products">
    <event type="alternative splicing"/>
    <isoform>
        <id>Q9JJL3-1</id>
        <name>1</name>
        <sequence type="displayed"/>
    </isoform>
    <isoform>
        <id>Q9JJL3-2</id>
        <name>2</name>
        <sequence type="described" ref="VSP_006149"/>
    </isoform>
</comment>
<comment type="tissue specificity">
    <text>Liver specific.</text>
</comment>
<comment type="domain">
    <text evidence="1">A conserved histidine residue in the third TMD (His-113) may play an essential role in the pH sensitivity of SLCO1B2/OATP1B2-mediated substrate transport.</text>
</comment>
<comment type="similarity">
    <text evidence="6">Belongs to the organo anion transporter (TC 2.A.60) family.</text>
</comment>
<gene>
    <name type="primary">Slco1b2</name>
    <name type="synonym">Oatp1b2</name>
    <name type="synonym">Slc21a10</name>
</gene>
<proteinExistence type="evidence at protein level"/>
<organism>
    <name type="scientific">Mus musculus</name>
    <name type="common">Mouse</name>
    <dbReference type="NCBI Taxonomy" id="10090"/>
    <lineage>
        <taxon>Eukaryota</taxon>
        <taxon>Metazoa</taxon>
        <taxon>Chordata</taxon>
        <taxon>Craniata</taxon>
        <taxon>Vertebrata</taxon>
        <taxon>Euteleostomi</taxon>
        <taxon>Mammalia</taxon>
        <taxon>Eutheria</taxon>
        <taxon>Euarchontoglires</taxon>
        <taxon>Glires</taxon>
        <taxon>Rodentia</taxon>
        <taxon>Myomorpha</taxon>
        <taxon>Muroidea</taxon>
        <taxon>Muridae</taxon>
        <taxon>Murinae</taxon>
        <taxon>Mus</taxon>
        <taxon>Mus</taxon>
    </lineage>
</organism>
<name>SO1B2_MOUSE</name>